<organism>
    <name type="scientific">Haloarcula marismortui (strain ATCC 43049 / DSM 3752 / JCM 8966 / VKM B-1809)</name>
    <name type="common">Halobacterium marismortui</name>
    <dbReference type="NCBI Taxonomy" id="272569"/>
    <lineage>
        <taxon>Archaea</taxon>
        <taxon>Methanobacteriati</taxon>
        <taxon>Methanobacteriota</taxon>
        <taxon>Stenosarchaea group</taxon>
        <taxon>Halobacteria</taxon>
        <taxon>Halobacteriales</taxon>
        <taxon>Haloarculaceae</taxon>
        <taxon>Haloarcula</taxon>
    </lineage>
</organism>
<reference key="1">
    <citation type="journal article" date="2004" name="Genome Res.">
        <title>Genome sequence of Haloarcula marismortui: a halophilic archaeon from the Dead Sea.</title>
        <authorList>
            <person name="Baliga N.S."/>
            <person name="Bonneau R."/>
            <person name="Facciotti M.T."/>
            <person name="Pan M."/>
            <person name="Glusman G."/>
            <person name="Deutsch E.W."/>
            <person name="Shannon P."/>
            <person name="Chiu Y."/>
            <person name="Weng R.S."/>
            <person name="Gan R.R."/>
            <person name="Hung P."/>
            <person name="Date S.V."/>
            <person name="Marcotte E."/>
            <person name="Hood L."/>
            <person name="Ng W.V."/>
        </authorList>
    </citation>
    <scope>NUCLEOTIDE SEQUENCE [LARGE SCALE GENOMIC DNA]</scope>
    <source>
        <strain>ATCC 43049 / DSM 3752 / JCM 8966 / VKM B-1809</strain>
    </source>
</reference>
<name>THYX_HALMA</name>
<proteinExistence type="inferred from homology"/>
<comment type="function">
    <text evidence="1">Catalyzes the reductive methylation of 2'-deoxyuridine-5'-monophosphate (dUMP) to 2'-deoxythymidine-5'-monophosphate (dTMP) while utilizing 5,10-methylenetetrahydrofolate (mTHF) as the methyl donor, and NADPH and FADH(2) as the reductant.</text>
</comment>
<comment type="catalytic activity">
    <reaction evidence="1">
        <text>dUMP + (6R)-5,10-methylene-5,6,7,8-tetrahydrofolate + NADPH + H(+) = dTMP + (6S)-5,6,7,8-tetrahydrofolate + NADP(+)</text>
        <dbReference type="Rhea" id="RHEA:29043"/>
        <dbReference type="ChEBI" id="CHEBI:15378"/>
        <dbReference type="ChEBI" id="CHEBI:15636"/>
        <dbReference type="ChEBI" id="CHEBI:57453"/>
        <dbReference type="ChEBI" id="CHEBI:57783"/>
        <dbReference type="ChEBI" id="CHEBI:58349"/>
        <dbReference type="ChEBI" id="CHEBI:63528"/>
        <dbReference type="ChEBI" id="CHEBI:246422"/>
        <dbReference type="EC" id="2.1.1.148"/>
    </reaction>
</comment>
<comment type="cofactor">
    <cofactor evidence="1">
        <name>FAD</name>
        <dbReference type="ChEBI" id="CHEBI:57692"/>
    </cofactor>
    <text evidence="1">Binds 4 FAD per tetramer. Each FAD binding site is formed by three monomers.</text>
</comment>
<comment type="pathway">
    <text evidence="1">Pyrimidine metabolism; dTTP biosynthesis.</text>
</comment>
<comment type="subunit">
    <text evidence="1">Homotetramer.</text>
</comment>
<comment type="similarity">
    <text evidence="1">Belongs to the thymidylate synthase ThyX family.</text>
</comment>
<keyword id="KW-0274">FAD</keyword>
<keyword id="KW-0285">Flavoprotein</keyword>
<keyword id="KW-0489">Methyltransferase</keyword>
<keyword id="KW-0521">NADP</keyword>
<keyword id="KW-0545">Nucleotide biosynthesis</keyword>
<keyword id="KW-1185">Reference proteome</keyword>
<keyword id="KW-0808">Transferase</keyword>
<dbReference type="EC" id="2.1.1.148" evidence="1"/>
<dbReference type="EMBL" id="AY596297">
    <property type="protein sequence ID" value="AAV46077.1"/>
    <property type="molecule type" value="Genomic_DNA"/>
</dbReference>
<dbReference type="RefSeq" id="WP_007190143.1">
    <property type="nucleotide sequence ID" value="NZ_CP039138.1"/>
</dbReference>
<dbReference type="SMR" id="Q5V325"/>
<dbReference type="STRING" id="272569.rrnAC1121"/>
<dbReference type="PaxDb" id="272569-rrnAC1121"/>
<dbReference type="EnsemblBacteria" id="AAV46077">
    <property type="protein sequence ID" value="AAV46077"/>
    <property type="gene ID" value="rrnAC1121"/>
</dbReference>
<dbReference type="GeneID" id="40152125"/>
<dbReference type="KEGG" id="hma:rrnAC1121"/>
<dbReference type="PATRIC" id="fig|272569.17.peg.1843"/>
<dbReference type="eggNOG" id="arCOG01883">
    <property type="taxonomic scope" value="Archaea"/>
</dbReference>
<dbReference type="HOGENOM" id="CLU_077585_0_0_2"/>
<dbReference type="UniPathway" id="UPA00575"/>
<dbReference type="Proteomes" id="UP000001169">
    <property type="component" value="Chromosome I"/>
</dbReference>
<dbReference type="GO" id="GO:0050660">
    <property type="term" value="F:flavin adenine dinucleotide binding"/>
    <property type="evidence" value="ECO:0007669"/>
    <property type="project" value="InterPro"/>
</dbReference>
<dbReference type="GO" id="GO:0070402">
    <property type="term" value="F:NADPH binding"/>
    <property type="evidence" value="ECO:0007669"/>
    <property type="project" value="TreeGrafter"/>
</dbReference>
<dbReference type="GO" id="GO:0050797">
    <property type="term" value="F:thymidylate synthase (FAD) activity"/>
    <property type="evidence" value="ECO:0007669"/>
    <property type="project" value="UniProtKB-UniRule"/>
</dbReference>
<dbReference type="GO" id="GO:0004799">
    <property type="term" value="F:thymidylate synthase activity"/>
    <property type="evidence" value="ECO:0007669"/>
    <property type="project" value="TreeGrafter"/>
</dbReference>
<dbReference type="GO" id="GO:0006231">
    <property type="term" value="P:dTMP biosynthetic process"/>
    <property type="evidence" value="ECO:0007669"/>
    <property type="project" value="UniProtKB-UniRule"/>
</dbReference>
<dbReference type="GO" id="GO:0006235">
    <property type="term" value="P:dTTP biosynthetic process"/>
    <property type="evidence" value="ECO:0007669"/>
    <property type="project" value="UniProtKB-UniRule"/>
</dbReference>
<dbReference type="GO" id="GO:0032259">
    <property type="term" value="P:methylation"/>
    <property type="evidence" value="ECO:0007669"/>
    <property type="project" value="UniProtKB-KW"/>
</dbReference>
<dbReference type="CDD" id="cd20175">
    <property type="entry name" value="ThyX"/>
    <property type="match status" value="1"/>
</dbReference>
<dbReference type="Gene3D" id="3.30.1360.170">
    <property type="match status" value="1"/>
</dbReference>
<dbReference type="HAMAP" id="MF_01408">
    <property type="entry name" value="ThyX"/>
    <property type="match status" value="1"/>
</dbReference>
<dbReference type="InterPro" id="IPR003669">
    <property type="entry name" value="Thymidylate_synthase_ThyX"/>
</dbReference>
<dbReference type="InterPro" id="IPR036098">
    <property type="entry name" value="Thymidylate_synthase_ThyX_sf"/>
</dbReference>
<dbReference type="NCBIfam" id="TIGR02170">
    <property type="entry name" value="thyX"/>
    <property type="match status" value="1"/>
</dbReference>
<dbReference type="PANTHER" id="PTHR34934">
    <property type="entry name" value="FLAVIN-DEPENDENT THYMIDYLATE SYNTHASE"/>
    <property type="match status" value="1"/>
</dbReference>
<dbReference type="PANTHER" id="PTHR34934:SF1">
    <property type="entry name" value="FLAVIN-DEPENDENT THYMIDYLATE SYNTHASE"/>
    <property type="match status" value="1"/>
</dbReference>
<dbReference type="Pfam" id="PF02511">
    <property type="entry name" value="Thy1"/>
    <property type="match status" value="1"/>
</dbReference>
<dbReference type="SUPFAM" id="SSF69796">
    <property type="entry name" value="Thymidylate synthase-complementing protein Thy1"/>
    <property type="match status" value="1"/>
</dbReference>
<dbReference type="PROSITE" id="PS51331">
    <property type="entry name" value="THYX"/>
    <property type="match status" value="1"/>
</dbReference>
<protein>
    <recommendedName>
        <fullName evidence="1">Flavin-dependent thymidylate synthase</fullName>
        <shortName evidence="1">FDTS</shortName>
        <ecNumber evidence="1">2.1.1.148</ecNumber>
    </recommendedName>
    <alternativeName>
        <fullName evidence="1">FAD-dependent thymidylate synthase</fullName>
    </alternativeName>
    <alternativeName>
        <fullName evidence="1">Thymidylate synthase ThyX</fullName>
        <shortName evidence="1">TS</shortName>
        <shortName evidence="1">TSase</shortName>
    </alternativeName>
</protein>
<accession>Q5V325</accession>
<gene>
    <name evidence="1" type="primary">thyX</name>
    <name type="ordered locus">rrnAC1121</name>
</gene>
<evidence type="ECO:0000255" key="1">
    <source>
        <dbReference type="HAMAP-Rule" id="MF_01408"/>
    </source>
</evidence>
<evidence type="ECO:0000255" key="2">
    <source>
        <dbReference type="PROSITE-ProRule" id="PRU00661"/>
    </source>
</evidence>
<sequence>MDVKLLEATDDPEDLICKAARNDYSDTSVGSQSFEATMAEVDGDSLEEKKETLIGHLLDHGHFGPFEHAQATFAVEGVSRSCMAQITRHRHVSFDVQSMRYVSFDDVDPEAVREGELVVTPPSATDPDWIGRNQQKASVSDEEFEERAEIFKDTIEQAVESYQELLELGMPPEDARFVLPIGTKVNIVMSMNARMLMHVADMRAAADAQWEIREMTEEMLELAADWCPKTFEYYEQEMKGRKNRLAP</sequence>
<feature type="chain" id="PRO_0000175589" description="Flavin-dependent thymidylate synthase">
    <location>
        <begin position="1"/>
        <end position="247"/>
    </location>
</feature>
<feature type="domain" description="ThyX" evidence="2">
    <location>
        <begin position="1"/>
        <end position="237"/>
    </location>
</feature>
<feature type="short sequence motif" description="ThyX motif" evidence="1">
    <location>
        <begin position="88"/>
        <end position="98"/>
    </location>
</feature>
<feature type="active site" description="Involved in ionization of N3 of dUMP, leading to its activation" evidence="1">
    <location>
        <position position="203"/>
    </location>
</feature>
<feature type="binding site" evidence="1">
    <location>
        <begin position="85"/>
        <end position="88"/>
    </location>
    <ligand>
        <name>dUMP</name>
        <dbReference type="ChEBI" id="CHEBI:246422"/>
        <note>ligand shared between dimeric partners</note>
    </ligand>
</feature>
<feature type="binding site" evidence="1">
    <location>
        <begin position="88"/>
        <end position="90"/>
    </location>
    <ligand>
        <name>FAD</name>
        <dbReference type="ChEBI" id="CHEBI:57692"/>
        <note>ligand shared between neighboring subunits</note>
    </ligand>
</feature>
<feature type="binding site" description="in other chain" evidence="1">
    <location>
        <begin position="98"/>
        <end position="100"/>
    </location>
    <ligand>
        <name>dUMP</name>
        <dbReference type="ChEBI" id="CHEBI:246422"/>
        <note>ligand shared between dimeric partners</note>
    </ligand>
</feature>
<feature type="binding site" description="in other chain" evidence="1">
    <location>
        <position position="176"/>
    </location>
    <ligand>
        <name>dUMP</name>
        <dbReference type="ChEBI" id="CHEBI:246422"/>
        <note>ligand shared between dimeric partners</note>
    </ligand>
</feature>
<feature type="binding site" evidence="1">
    <location>
        <begin position="192"/>
        <end position="194"/>
    </location>
    <ligand>
        <name>FAD</name>
        <dbReference type="ChEBI" id="CHEBI:57692"/>
        <note>ligand shared between neighboring subunits</note>
    </ligand>
</feature>
<feature type="binding site" evidence="1">
    <location>
        <position position="198"/>
    </location>
    <ligand>
        <name>FAD</name>
        <dbReference type="ChEBI" id="CHEBI:57692"/>
        <note>ligand shared between neighboring subunits</note>
    </ligand>
</feature>
<feature type="binding site" evidence="1">
    <location>
        <position position="203"/>
    </location>
    <ligand>
        <name>dUMP</name>
        <dbReference type="ChEBI" id="CHEBI:246422"/>
        <note>ligand shared between dimeric partners</note>
    </ligand>
</feature>